<sequence>MDPAAIFLILAIPIASVYLLFYHKKRVNGLSSPPGPRGLPFIGHFYQIYKSECAHEYISNLSKQYGSLMTLHLGSVPALVVSSPKMAQEVLKTQDLVFCSRAQMTGSGKLSYNGLEMAFAPYGEHWRNVRKMCTLELFTQKRAQFNFRPVREDEVSRMVGRLSEAAAASEDVNAYECFTNFATSIISRVAFGKRYDEDNLGKEKFQRMVADIEAMFAAFFVSDFFPMFGWIDRLSGVKAVLDRNFNEMDTFYQELIDEHLKPDRPESLNGDLIDVMLKNKGSFLTMDSIKAILLNVFSGGIGTTGSALVFAMTALLRNQRVMKKAQEEVRSVIGKKEIVDEDDIQKLPYLRAVVKETLRLYPPGPLLIPRVAMESCVLGEDEDHMYMIKPNTIVYVNTWGIGRDPKYWKNPLEFMPERFFERPDLNYTGQQFEYLPFGSGRRICAGIIIGQNNVEVGLANLLYSFDWEPPTGKTFEDIDDQPCNGLTLAKKNPLYIRPKIYVHP</sequence>
<feature type="chain" id="PRO_0000454523" description="Xanthotoxol synthase">
    <location>
        <begin position="1"/>
        <end position="504"/>
    </location>
</feature>
<feature type="transmembrane region" description="Helical" evidence="3">
    <location>
        <begin position="3"/>
        <end position="23"/>
    </location>
</feature>
<feature type="region of interest" description="Substrate specificity" evidence="4">
    <location>
        <begin position="363"/>
        <end position="368"/>
    </location>
</feature>
<feature type="binding site" description="axial binding residue" evidence="2">
    <location>
        <position position="444"/>
    </location>
    <ligand>
        <name>heme</name>
        <dbReference type="ChEBI" id="CHEBI:30413"/>
    </ligand>
    <ligandPart>
        <name>Fe</name>
        <dbReference type="ChEBI" id="CHEBI:18248"/>
    </ligandPart>
</feature>
<feature type="site" description="Substrate specificity" evidence="4">
    <location>
        <position position="118"/>
    </location>
</feature>
<feature type="site" description="Substrate specificity" evidence="4">
    <location>
        <position position="299"/>
    </location>
</feature>
<feature type="site" description="Substrate specificity" evidence="4">
    <location>
        <position position="303"/>
    </location>
</feature>
<feature type="mutagenesis site" description="In Mut1; lost activity on fraxetin, scopoletin, 6-methoxycoumarin, 7-methoxycoumarin and 7-methoxy-3-methylcoumarin, but acquired activity on esculetin. In Mut4; restricted substrate specificity to esculetin, thus mimicking CYP71AZ3 activity; when associated with 280-E--W-312 and 364-A--T-372." evidence="4">
    <original>GKLSYNGLEMAFAPYGEHWRNV</original>
    <variation>QKLSYNGLDVAFSPYTDQWRHT</variation>
    <location>
        <begin position="108"/>
        <end position="129"/>
    </location>
</feature>
<feature type="mutagenesis site" description="In Mut2; lost activity on psoralen but acquired activity on esculetin. In Mut4; restricted substrate specificity to esculetin, thus mimicking CYP71AZ3 activity; when associated with 108-Q--T-129 and 364-A--T-372." evidence="4">
    <original>KGSFLTMDSIKAILLNVFSGGIGTTGSALVF</original>
    <variation>EGSSLTKDSMKAILLNVFNGGTGTTATVLAW</variation>
    <location>
        <begin position="280"/>
        <end position="310"/>
    </location>
</feature>
<feature type="mutagenesis site" description="In Mut3; reduced activity on 6-methoxycoumarin and 7-methoxy-3-methylcoumarin, but acquired activity on esculetin. In Mut4; restricted substrate specificity to esculetin, thus mimicking CYP71AZ3 activity; when associated with 108-Q--T-129 and 280-E--W-312." evidence="4">
    <original>GPLLIPRVA</original>
    <variation>APVLVPRET</variation>
    <location>
        <begin position="364"/>
        <end position="372"/>
    </location>
</feature>
<gene>
    <name evidence="5" type="primary">CYP71AZ4</name>
</gene>
<proteinExistence type="evidence at protein level"/>
<name>C71Z4_PASSA</name>
<keyword id="KW-0256">Endoplasmic reticulum</keyword>
<keyword id="KW-0349">Heme</keyword>
<keyword id="KW-0408">Iron</keyword>
<keyword id="KW-0472">Membrane</keyword>
<keyword id="KW-0479">Metal-binding</keyword>
<keyword id="KW-0492">Microsome</keyword>
<keyword id="KW-0503">Monooxygenase</keyword>
<keyword id="KW-0560">Oxidoreductase</keyword>
<keyword id="KW-0812">Transmembrane</keyword>
<keyword id="KW-1133">Transmembrane helix</keyword>
<accession>A0A2Z5D854</accession>
<dbReference type="EC" id="1.14.14.-" evidence="4"/>
<dbReference type="EMBL" id="MH000219">
    <property type="protein sequence ID" value="AXB38861.1"/>
    <property type="molecule type" value="mRNA"/>
</dbReference>
<dbReference type="SMR" id="A0A2Z5D854"/>
<dbReference type="KEGG" id="ag:AXB38861"/>
<dbReference type="GO" id="GO:0005783">
    <property type="term" value="C:endoplasmic reticulum"/>
    <property type="evidence" value="ECO:0007669"/>
    <property type="project" value="UniProtKB-KW"/>
</dbReference>
<dbReference type="GO" id="GO:0016020">
    <property type="term" value="C:membrane"/>
    <property type="evidence" value="ECO:0007669"/>
    <property type="project" value="UniProtKB-KW"/>
</dbReference>
<dbReference type="GO" id="GO:0020037">
    <property type="term" value="F:heme binding"/>
    <property type="evidence" value="ECO:0007669"/>
    <property type="project" value="InterPro"/>
</dbReference>
<dbReference type="GO" id="GO:0005506">
    <property type="term" value="F:iron ion binding"/>
    <property type="evidence" value="ECO:0007669"/>
    <property type="project" value="InterPro"/>
</dbReference>
<dbReference type="GO" id="GO:0004497">
    <property type="term" value="F:monooxygenase activity"/>
    <property type="evidence" value="ECO:0007669"/>
    <property type="project" value="UniProtKB-KW"/>
</dbReference>
<dbReference type="GO" id="GO:0016705">
    <property type="term" value="F:oxidoreductase activity, acting on paired donors, with incorporation or reduction of molecular oxygen"/>
    <property type="evidence" value="ECO:0007669"/>
    <property type="project" value="InterPro"/>
</dbReference>
<dbReference type="GO" id="GO:0009805">
    <property type="term" value="P:coumarin biosynthetic process"/>
    <property type="evidence" value="ECO:0000314"/>
    <property type="project" value="UniProtKB"/>
</dbReference>
<dbReference type="GO" id="GO:0009611">
    <property type="term" value="P:response to wounding"/>
    <property type="evidence" value="ECO:0000270"/>
    <property type="project" value="UniProtKB"/>
</dbReference>
<dbReference type="CDD" id="cd11072">
    <property type="entry name" value="CYP71-like"/>
    <property type="match status" value="1"/>
</dbReference>
<dbReference type="FunFam" id="1.10.630.10:FF:000011">
    <property type="entry name" value="Cytochrome P450 83B1"/>
    <property type="match status" value="1"/>
</dbReference>
<dbReference type="Gene3D" id="1.10.630.10">
    <property type="entry name" value="Cytochrome P450"/>
    <property type="match status" value="1"/>
</dbReference>
<dbReference type="InterPro" id="IPR001128">
    <property type="entry name" value="Cyt_P450"/>
</dbReference>
<dbReference type="InterPro" id="IPR017972">
    <property type="entry name" value="Cyt_P450_CS"/>
</dbReference>
<dbReference type="InterPro" id="IPR002401">
    <property type="entry name" value="Cyt_P450_E_grp-I"/>
</dbReference>
<dbReference type="InterPro" id="IPR036396">
    <property type="entry name" value="Cyt_P450_sf"/>
</dbReference>
<dbReference type="PANTHER" id="PTHR47955:SF22">
    <property type="entry name" value="CYTOCHROME P450 83B1-LIKE"/>
    <property type="match status" value="1"/>
</dbReference>
<dbReference type="PANTHER" id="PTHR47955">
    <property type="entry name" value="CYTOCHROME P450 FAMILY 71 PROTEIN"/>
    <property type="match status" value="1"/>
</dbReference>
<dbReference type="Pfam" id="PF00067">
    <property type="entry name" value="p450"/>
    <property type="match status" value="1"/>
</dbReference>
<dbReference type="PRINTS" id="PR00463">
    <property type="entry name" value="EP450I"/>
</dbReference>
<dbReference type="PRINTS" id="PR00385">
    <property type="entry name" value="P450"/>
</dbReference>
<dbReference type="SUPFAM" id="SSF48264">
    <property type="entry name" value="Cytochrome P450"/>
    <property type="match status" value="1"/>
</dbReference>
<dbReference type="PROSITE" id="PS00086">
    <property type="entry name" value="CYTOCHROME_P450"/>
    <property type="match status" value="1"/>
</dbReference>
<reference key="1">
    <citation type="journal article" date="2018" name="Front. Plant Sci.">
        <title>The CYP71AZ P450 subfamily: A driving factor for the diversification of coumarin biosynthesis in apiaceous plants.</title>
        <authorList>
            <person name="Krieger C."/>
            <person name="Roselli S."/>
            <person name="Kellner-Thielmann S."/>
            <person name="Galati G."/>
            <person name="Schneider B."/>
            <person name="Grosjean J."/>
            <person name="Olry A."/>
            <person name="Ritchie D."/>
            <person name="Matern U."/>
            <person name="Bourgaud F."/>
            <person name="Hehn A."/>
        </authorList>
    </citation>
    <scope>NUCLEOTIDE SEQUENCE [MRNA]</scope>
    <scope>FUNCTION</scope>
    <scope>MUTAGENESIS OF 108-GLY--VAL-129; 280-LYS--PHE-310 AND 364-GLY--ALA-372</scope>
    <scope>CATALYTIC ACTIVITY</scope>
    <scope>BIOPHYSICOCHEMICAL PROPERTIES</scope>
    <scope>REVIEW</scope>
    <scope>PATHWAY</scope>
    <scope>INDUCTION BY WOUNDING</scope>
    <source>
        <strain>cv. Demi-long de Guernesey</strain>
    </source>
</reference>
<organism>
    <name type="scientific">Pastinaca sativa</name>
    <name type="common">Wild parsnip</name>
    <name type="synonym">Anethum pastinaca</name>
    <dbReference type="NCBI Taxonomy" id="4041"/>
    <lineage>
        <taxon>Eukaryota</taxon>
        <taxon>Viridiplantae</taxon>
        <taxon>Streptophyta</taxon>
        <taxon>Embryophyta</taxon>
        <taxon>Tracheophyta</taxon>
        <taxon>Spermatophyta</taxon>
        <taxon>Magnoliopsida</taxon>
        <taxon>eudicotyledons</taxon>
        <taxon>Gunneridae</taxon>
        <taxon>Pentapetalae</taxon>
        <taxon>asterids</taxon>
        <taxon>campanulids</taxon>
        <taxon>Apiales</taxon>
        <taxon>Apiaceae</taxon>
        <taxon>Apioideae</taxon>
        <taxon>apioid superclade</taxon>
        <taxon>Tordylieae</taxon>
        <taxon>Tordyliinae</taxon>
        <taxon>Pastinaca</taxon>
    </lineage>
</organism>
<evidence type="ECO:0000250" key="1">
    <source>
        <dbReference type="UniProtKB" id="Q6QNI4"/>
    </source>
</evidence>
<evidence type="ECO:0000250" key="2">
    <source>
        <dbReference type="UniProtKB" id="Q94IP1"/>
    </source>
</evidence>
<evidence type="ECO:0000255" key="3"/>
<evidence type="ECO:0000269" key="4">
    <source>
    </source>
</evidence>
<evidence type="ECO:0000303" key="5">
    <source>
    </source>
</evidence>
<evidence type="ECO:0000305" key="6"/>
<comment type="function">
    <text evidence="4 5">Involved in the biosynthesis of coumarins and furanocoumarins (FCs), natural products required for defense responses against attacks by predators with potential medical and agroindustrial usages such as anticoagulant, rodenticide and artificial vanilla substitutes (PubMed:29971079). Catalyzes the conversion of psoralen into xanthotoxol and of 6-methoxycoumarin into scopoletin (PubMed:29971079). Can also convert with a lower efficiency scopoletin into fraxetin and 7-methoxycoumarin into daphnetin-7-methylether, and use 7-methoxy-3-methylcoumarin as substrate (PubMed:29971079).</text>
</comment>
<comment type="catalytic activity">
    <reaction evidence="4">
        <text>psoralen + reduced [NADPH--hemoprotein reductase] + O2 = xanthotoxol + oxidized [NADPH--hemoprotein reductase] + H2O + H(+)</text>
        <dbReference type="Rhea" id="RHEA:68548"/>
        <dbReference type="Rhea" id="RHEA-COMP:11964"/>
        <dbReference type="Rhea" id="RHEA-COMP:11965"/>
        <dbReference type="ChEBI" id="CHEBI:15377"/>
        <dbReference type="ChEBI" id="CHEBI:15378"/>
        <dbReference type="ChEBI" id="CHEBI:15379"/>
        <dbReference type="ChEBI" id="CHEBI:15709"/>
        <dbReference type="ChEBI" id="CHEBI:27616"/>
        <dbReference type="ChEBI" id="CHEBI:57618"/>
        <dbReference type="ChEBI" id="CHEBI:58210"/>
    </reaction>
    <physiologicalReaction direction="left-to-right" evidence="4">
        <dbReference type="Rhea" id="RHEA:68549"/>
    </physiologicalReaction>
</comment>
<comment type="catalytic activity">
    <reaction evidence="4">
        <text>6-methoxycoumarin + reduced [NADPH--hemoprotein reductase] + O2 = scopoletin + oxidized [NADPH--hemoprotein reductase] + H2O + H(+)</text>
        <dbReference type="Rhea" id="RHEA:68564"/>
        <dbReference type="Rhea" id="RHEA-COMP:11964"/>
        <dbReference type="Rhea" id="RHEA-COMP:11965"/>
        <dbReference type="ChEBI" id="CHEBI:15377"/>
        <dbReference type="ChEBI" id="CHEBI:15378"/>
        <dbReference type="ChEBI" id="CHEBI:15379"/>
        <dbReference type="ChEBI" id="CHEBI:17488"/>
        <dbReference type="ChEBI" id="CHEBI:57618"/>
        <dbReference type="ChEBI" id="CHEBI:58210"/>
        <dbReference type="ChEBI" id="CHEBI:178005"/>
    </reaction>
    <physiologicalReaction direction="left-to-right" evidence="4">
        <dbReference type="Rhea" id="RHEA:68565"/>
    </physiologicalReaction>
</comment>
<comment type="cofactor">
    <cofactor evidence="2">
        <name>heme</name>
        <dbReference type="ChEBI" id="CHEBI:30413"/>
    </cofactor>
</comment>
<comment type="biophysicochemical properties">
    <kinetics>
        <KM evidence="4">11.3 uM for psoralen (at pH 7.4 and 28 degrees Celsius)</KM>
        <KM evidence="4">9.5 uM for 6-methoxycoumarin (at pH 7.4 and 28 degrees Celsius)</KM>
        <KM evidence="4">762.2 uM for scopoletin (at pH 7.4 and 28 degrees Celsius)</KM>
        <KM evidence="4">159.9 uM for 7-methoxy-3-methylcoumarin (at pH 7.4 and 28 degrees Celsius)</KM>
        <KM evidence="4">72.5 uM for 7-methoxycoumarin (at pH 7.4 and 28 degrees Celsius)</KM>
    </kinetics>
</comment>
<comment type="pathway">
    <text evidence="4">Secondary metabolite biosynthesis.</text>
</comment>
<comment type="subcellular location">
    <subcellularLocation>
        <location evidence="1">Microsome membrane</location>
        <topology evidence="3">Single-pass membrane protein</topology>
    </subcellularLocation>
</comment>
<comment type="induction">
    <text evidence="4">Accumulates in roots after wounding.</text>
</comment>
<comment type="similarity">
    <text evidence="6">Belongs to the cytochrome P450 family.</text>
</comment>
<protein>
    <recommendedName>
        <fullName evidence="5">Xanthotoxol synthase</fullName>
        <ecNumber evidence="4">1.14.14.-</ecNumber>
    </recommendedName>
    <alternativeName>
        <fullName evidence="5">Cytochrome P450 CYP71AZ4</fullName>
    </alternativeName>
    <alternativeName>
        <fullName evidence="5">Fraxetin synthase</fullName>
        <ecNumber evidence="4">1.14.14.-</ecNumber>
    </alternativeName>
</protein>